<sequence length="254" mass="26893">MPQQIELRNIALQAAQPLVHGVSLTLQRGRVLALVGGSGSGKSLTCAATLGILPAGVRQTAGEILADGKPVSPYALRGIKIATIMQNPRSAFNPLHTMHTHARETCLALGKPADDATLTAAIEAVGLENAARVLKLYPFEMSGGMLQRMMIAMAVLCESPFIIADEPTTDLDVVAQARILDLLESIMQKQAPGMLLVTHDMGVVARLADDVAVMSQGKIVEQGDVETLFNAPKHTVTRSLVSAHLALYGMELAS</sequence>
<protein>
    <recommendedName>
        <fullName evidence="1">Nickel import ATP-binding protein NikD</fullName>
        <ecNumber evidence="1">7.2.2.11</ecNumber>
    </recommendedName>
</protein>
<dbReference type="EC" id="7.2.2.11" evidence="1"/>
<dbReference type="EMBL" id="CP000266">
    <property type="protein sequence ID" value="ABF05521.1"/>
    <property type="molecule type" value="Genomic_DNA"/>
</dbReference>
<dbReference type="RefSeq" id="WP_001136248.1">
    <property type="nucleotide sequence ID" value="NC_008258.1"/>
</dbReference>
<dbReference type="SMR" id="Q0SZJ4"/>
<dbReference type="KEGG" id="sfv:SFV_3482"/>
<dbReference type="HOGENOM" id="CLU_000604_1_23_6"/>
<dbReference type="Proteomes" id="UP000000659">
    <property type="component" value="Chromosome"/>
</dbReference>
<dbReference type="GO" id="GO:0005886">
    <property type="term" value="C:plasma membrane"/>
    <property type="evidence" value="ECO:0007669"/>
    <property type="project" value="UniProtKB-SubCell"/>
</dbReference>
<dbReference type="GO" id="GO:0015413">
    <property type="term" value="F:ABC-type nickel transporter activity"/>
    <property type="evidence" value="ECO:0007669"/>
    <property type="project" value="UniProtKB-EC"/>
</dbReference>
<dbReference type="GO" id="GO:0005524">
    <property type="term" value="F:ATP binding"/>
    <property type="evidence" value="ECO:0007669"/>
    <property type="project" value="UniProtKB-KW"/>
</dbReference>
<dbReference type="GO" id="GO:0016887">
    <property type="term" value="F:ATP hydrolysis activity"/>
    <property type="evidence" value="ECO:0007669"/>
    <property type="project" value="InterPro"/>
</dbReference>
<dbReference type="GO" id="GO:0016151">
    <property type="term" value="F:nickel cation binding"/>
    <property type="evidence" value="ECO:0007669"/>
    <property type="project" value="InterPro"/>
</dbReference>
<dbReference type="CDD" id="cd03257">
    <property type="entry name" value="ABC_NikE_OppD_transporters"/>
    <property type="match status" value="1"/>
</dbReference>
<dbReference type="FunFam" id="3.40.50.300:FF:000858">
    <property type="entry name" value="Nickel import ATP-binding protein NikD"/>
    <property type="match status" value="1"/>
</dbReference>
<dbReference type="Gene3D" id="3.40.50.300">
    <property type="entry name" value="P-loop containing nucleotide triphosphate hydrolases"/>
    <property type="match status" value="1"/>
</dbReference>
<dbReference type="InterPro" id="IPR003593">
    <property type="entry name" value="AAA+_ATPase"/>
</dbReference>
<dbReference type="InterPro" id="IPR050388">
    <property type="entry name" value="ABC_Ni/Peptide_Import"/>
</dbReference>
<dbReference type="InterPro" id="IPR003439">
    <property type="entry name" value="ABC_transporter-like_ATP-bd"/>
</dbReference>
<dbReference type="InterPro" id="IPR017871">
    <property type="entry name" value="ABC_transporter-like_CS"/>
</dbReference>
<dbReference type="InterPro" id="IPR014138">
    <property type="entry name" value="Nickel_NikD"/>
</dbReference>
<dbReference type="InterPro" id="IPR027417">
    <property type="entry name" value="P-loop_NTPase"/>
</dbReference>
<dbReference type="NCBIfam" id="TIGR02770">
    <property type="entry name" value="nickel_nikD"/>
    <property type="match status" value="1"/>
</dbReference>
<dbReference type="PANTHER" id="PTHR43297:SF2">
    <property type="entry name" value="DIPEPTIDE TRANSPORT ATP-BINDING PROTEIN DPPD"/>
    <property type="match status" value="1"/>
</dbReference>
<dbReference type="PANTHER" id="PTHR43297">
    <property type="entry name" value="OLIGOPEPTIDE TRANSPORT ATP-BINDING PROTEIN APPD"/>
    <property type="match status" value="1"/>
</dbReference>
<dbReference type="Pfam" id="PF00005">
    <property type="entry name" value="ABC_tran"/>
    <property type="match status" value="1"/>
</dbReference>
<dbReference type="SMART" id="SM00382">
    <property type="entry name" value="AAA"/>
    <property type="match status" value="1"/>
</dbReference>
<dbReference type="SUPFAM" id="SSF52540">
    <property type="entry name" value="P-loop containing nucleoside triphosphate hydrolases"/>
    <property type="match status" value="1"/>
</dbReference>
<dbReference type="PROSITE" id="PS00211">
    <property type="entry name" value="ABC_TRANSPORTER_1"/>
    <property type="match status" value="1"/>
</dbReference>
<dbReference type="PROSITE" id="PS50893">
    <property type="entry name" value="ABC_TRANSPORTER_2"/>
    <property type="match status" value="1"/>
</dbReference>
<dbReference type="PROSITE" id="PS51247">
    <property type="entry name" value="NIKD"/>
    <property type="match status" value="1"/>
</dbReference>
<comment type="function">
    <text evidence="1">Part of the ABC transporter complex NikABCDE involved in nickel import. Responsible for energy coupling to the transport system.</text>
</comment>
<comment type="catalytic activity">
    <reaction evidence="1">
        <text>Ni(2+)(out) + ATP + H2O = Ni(2+)(in) + ADP + phosphate + H(+)</text>
        <dbReference type="Rhea" id="RHEA:15557"/>
        <dbReference type="ChEBI" id="CHEBI:15377"/>
        <dbReference type="ChEBI" id="CHEBI:15378"/>
        <dbReference type="ChEBI" id="CHEBI:30616"/>
        <dbReference type="ChEBI" id="CHEBI:43474"/>
        <dbReference type="ChEBI" id="CHEBI:49786"/>
        <dbReference type="ChEBI" id="CHEBI:456216"/>
        <dbReference type="EC" id="7.2.2.11"/>
    </reaction>
</comment>
<comment type="subunit">
    <text evidence="1">The complex is composed of two ATP-binding proteins (NikD and NikE), two transmembrane proteins (NikB and NikC) and a solute-binding protein (NikA).</text>
</comment>
<comment type="subcellular location">
    <subcellularLocation>
        <location evidence="1">Cell inner membrane</location>
        <topology evidence="1">Peripheral membrane protein</topology>
    </subcellularLocation>
</comment>
<comment type="similarity">
    <text evidence="1">Belongs to the ABC transporter superfamily. Nickel importer (TC 3.A.1.5.3) family.</text>
</comment>
<accession>Q0SZJ4</accession>
<name>NIKD_SHIF8</name>
<proteinExistence type="inferred from homology"/>
<reference key="1">
    <citation type="journal article" date="2006" name="BMC Genomics">
        <title>Complete genome sequence of Shigella flexneri 5b and comparison with Shigella flexneri 2a.</title>
        <authorList>
            <person name="Nie H."/>
            <person name="Yang F."/>
            <person name="Zhang X."/>
            <person name="Yang J."/>
            <person name="Chen L."/>
            <person name="Wang J."/>
            <person name="Xiong Z."/>
            <person name="Peng J."/>
            <person name="Sun L."/>
            <person name="Dong J."/>
            <person name="Xue Y."/>
            <person name="Xu X."/>
            <person name="Chen S."/>
            <person name="Yao Z."/>
            <person name="Shen Y."/>
            <person name="Jin Q."/>
        </authorList>
    </citation>
    <scope>NUCLEOTIDE SEQUENCE [LARGE SCALE GENOMIC DNA]</scope>
    <source>
        <strain>8401</strain>
    </source>
</reference>
<feature type="chain" id="PRO_0000274118" description="Nickel import ATP-binding protein NikD">
    <location>
        <begin position="1"/>
        <end position="254"/>
    </location>
</feature>
<feature type="domain" description="ABC transporter" evidence="1">
    <location>
        <begin position="2"/>
        <end position="241"/>
    </location>
</feature>
<feature type="binding site" evidence="1">
    <location>
        <begin position="36"/>
        <end position="43"/>
    </location>
    <ligand>
        <name>ATP</name>
        <dbReference type="ChEBI" id="CHEBI:30616"/>
    </ligand>
</feature>
<organism>
    <name type="scientific">Shigella flexneri serotype 5b (strain 8401)</name>
    <dbReference type="NCBI Taxonomy" id="373384"/>
    <lineage>
        <taxon>Bacteria</taxon>
        <taxon>Pseudomonadati</taxon>
        <taxon>Pseudomonadota</taxon>
        <taxon>Gammaproteobacteria</taxon>
        <taxon>Enterobacterales</taxon>
        <taxon>Enterobacteriaceae</taxon>
        <taxon>Shigella</taxon>
    </lineage>
</organism>
<keyword id="KW-0067">ATP-binding</keyword>
<keyword id="KW-0997">Cell inner membrane</keyword>
<keyword id="KW-1003">Cell membrane</keyword>
<keyword id="KW-0406">Ion transport</keyword>
<keyword id="KW-0472">Membrane</keyword>
<keyword id="KW-0533">Nickel</keyword>
<keyword id="KW-0921">Nickel transport</keyword>
<keyword id="KW-0547">Nucleotide-binding</keyword>
<keyword id="KW-1278">Translocase</keyword>
<keyword id="KW-0813">Transport</keyword>
<evidence type="ECO:0000255" key="1">
    <source>
        <dbReference type="HAMAP-Rule" id="MF_01711"/>
    </source>
</evidence>
<gene>
    <name evidence="1" type="primary">nikD</name>
    <name type="ordered locus">SFV_3482</name>
</gene>